<proteinExistence type="inferred from homology"/>
<accession>B7LNX6</accession>
<dbReference type="EMBL" id="CU928158">
    <property type="protein sequence ID" value="CAQ88632.1"/>
    <property type="molecule type" value="Genomic_DNA"/>
</dbReference>
<dbReference type="RefSeq" id="WP_000561985.1">
    <property type="nucleotide sequence ID" value="NC_011740.1"/>
</dbReference>
<dbReference type="SMR" id="B7LNX6"/>
<dbReference type="GeneID" id="75057846"/>
<dbReference type="KEGG" id="efe:EFER_1103"/>
<dbReference type="HOGENOM" id="CLU_123865_1_0_6"/>
<dbReference type="OrthoDB" id="9806050at2"/>
<dbReference type="Proteomes" id="UP000000745">
    <property type="component" value="Chromosome"/>
</dbReference>
<dbReference type="GO" id="GO:0005737">
    <property type="term" value="C:cytoplasm"/>
    <property type="evidence" value="ECO:0007669"/>
    <property type="project" value="UniProtKB-SubCell"/>
</dbReference>
<dbReference type="GO" id="GO:0003677">
    <property type="term" value="F:DNA binding"/>
    <property type="evidence" value="ECO:0007669"/>
    <property type="project" value="InterPro"/>
</dbReference>
<dbReference type="GO" id="GO:0009408">
    <property type="term" value="P:response to heat"/>
    <property type="evidence" value="ECO:0007669"/>
    <property type="project" value="UniProtKB-UniRule"/>
</dbReference>
<dbReference type="Gene3D" id="2.30.30.390">
    <property type="entry name" value="Hemimethylated DNA-binding domain"/>
    <property type="match status" value="1"/>
</dbReference>
<dbReference type="HAMAP" id="MF_01194">
    <property type="entry name" value="HspQ"/>
    <property type="match status" value="1"/>
</dbReference>
<dbReference type="InterPro" id="IPR011722">
    <property type="entry name" value="Hemimethylated_DNA-bd_dom"/>
</dbReference>
<dbReference type="InterPro" id="IPR036623">
    <property type="entry name" value="Hemimethylated_DNA-bd_sf"/>
</dbReference>
<dbReference type="InterPro" id="IPR022866">
    <property type="entry name" value="HspQ"/>
</dbReference>
<dbReference type="NCBIfam" id="NF010729">
    <property type="entry name" value="PRK14129.1"/>
    <property type="match status" value="1"/>
</dbReference>
<dbReference type="NCBIfam" id="TIGR02097">
    <property type="entry name" value="yccV"/>
    <property type="match status" value="1"/>
</dbReference>
<dbReference type="Pfam" id="PF08755">
    <property type="entry name" value="YccV-like"/>
    <property type="match status" value="1"/>
</dbReference>
<dbReference type="SMART" id="SM00992">
    <property type="entry name" value="YccV-like"/>
    <property type="match status" value="1"/>
</dbReference>
<dbReference type="SUPFAM" id="SSF141255">
    <property type="entry name" value="YccV-like"/>
    <property type="match status" value="1"/>
</dbReference>
<keyword id="KW-0963">Cytoplasm</keyword>
<keyword id="KW-0346">Stress response</keyword>
<feature type="chain" id="PRO_1000138411" description="Heat shock protein HspQ">
    <location>
        <begin position="1"/>
        <end position="105"/>
    </location>
</feature>
<reference key="1">
    <citation type="journal article" date="2009" name="PLoS Genet.">
        <title>Organised genome dynamics in the Escherichia coli species results in highly diverse adaptive paths.</title>
        <authorList>
            <person name="Touchon M."/>
            <person name="Hoede C."/>
            <person name="Tenaillon O."/>
            <person name="Barbe V."/>
            <person name="Baeriswyl S."/>
            <person name="Bidet P."/>
            <person name="Bingen E."/>
            <person name="Bonacorsi S."/>
            <person name="Bouchier C."/>
            <person name="Bouvet O."/>
            <person name="Calteau A."/>
            <person name="Chiapello H."/>
            <person name="Clermont O."/>
            <person name="Cruveiller S."/>
            <person name="Danchin A."/>
            <person name="Diard M."/>
            <person name="Dossat C."/>
            <person name="Karoui M.E."/>
            <person name="Frapy E."/>
            <person name="Garry L."/>
            <person name="Ghigo J.M."/>
            <person name="Gilles A.M."/>
            <person name="Johnson J."/>
            <person name="Le Bouguenec C."/>
            <person name="Lescat M."/>
            <person name="Mangenot S."/>
            <person name="Martinez-Jehanne V."/>
            <person name="Matic I."/>
            <person name="Nassif X."/>
            <person name="Oztas S."/>
            <person name="Petit M.A."/>
            <person name="Pichon C."/>
            <person name="Rouy Z."/>
            <person name="Ruf C.S."/>
            <person name="Schneider D."/>
            <person name="Tourret J."/>
            <person name="Vacherie B."/>
            <person name="Vallenet D."/>
            <person name="Medigue C."/>
            <person name="Rocha E.P.C."/>
            <person name="Denamur E."/>
        </authorList>
    </citation>
    <scope>NUCLEOTIDE SEQUENCE [LARGE SCALE GENOMIC DNA]</scope>
    <source>
        <strain>ATCC 35469 / DSM 13698 / BCRC 15582 / CCUG 18766 / IAM 14443 / JCM 21226 / LMG 7866 / NBRC 102419 / NCTC 12128 / CDC 0568-73</strain>
    </source>
</reference>
<organism>
    <name type="scientific">Escherichia fergusonii (strain ATCC 35469 / DSM 13698 / CCUG 18766 / IAM 14443 / JCM 21226 / LMG 7866 / NBRC 102419 / NCTC 12128 / CDC 0568-73)</name>
    <dbReference type="NCBI Taxonomy" id="585054"/>
    <lineage>
        <taxon>Bacteria</taxon>
        <taxon>Pseudomonadati</taxon>
        <taxon>Pseudomonadota</taxon>
        <taxon>Gammaproteobacteria</taxon>
        <taxon>Enterobacterales</taxon>
        <taxon>Enterobacteriaceae</taxon>
        <taxon>Escherichia</taxon>
    </lineage>
</organism>
<protein>
    <recommendedName>
        <fullName evidence="1">Heat shock protein HspQ</fullName>
    </recommendedName>
</protein>
<evidence type="ECO:0000255" key="1">
    <source>
        <dbReference type="HAMAP-Rule" id="MF_01194"/>
    </source>
</evidence>
<name>HSPQ_ESCF3</name>
<comment type="function">
    <text evidence="1">Involved in the degradation of certain denaturated proteins, including DnaA, during heat shock stress.</text>
</comment>
<comment type="subcellular location">
    <subcellularLocation>
        <location evidence="1">Cytoplasm</location>
    </subcellularLocation>
</comment>
<comment type="similarity">
    <text evidence="1">Belongs to the HspQ family.</text>
</comment>
<sequence length="105" mass="11865">MIASKFGIGQQVRHSLLGYLGVVVDIDPVYSLAEPSPDELAVNDELRAAPWYHVVMEDDNGLPIHTYLAEAQLSSEMREEHPEQPSMDELARTIRKQLQAPRLRN</sequence>
<gene>
    <name evidence="1" type="primary">hspQ</name>
    <name type="ordered locus">EFER_1103</name>
</gene>